<sequence length="11" mass="1103">GSSGLISMPRV</sequence>
<comment type="function">
    <text evidence="4">Mediates visceral muscle contractile activity (myotropic activity).</text>
</comment>
<comment type="subcellular location">
    <subcellularLocation>
        <location evidence="4">Secreted</location>
    </subcellularLocation>
</comment>
<comment type="similarity">
    <text evidence="1">Belongs to the periviscerokinin family.</text>
</comment>
<reference evidence="4" key="1">
    <citation type="journal article" date="2009" name="BMC Evol. Biol.">
        <title>A proteomic approach for studying insect phylogeny: CAPA peptides of ancient insect taxa (Dictyoptera, Blattoptera) as a test case.</title>
        <authorList>
            <person name="Roth S."/>
            <person name="Fromm B."/>
            <person name="Gaede G."/>
            <person name="Predel R."/>
        </authorList>
    </citation>
    <scope>PROTEIN SEQUENCE</scope>
    <scope>AMIDATION AT VAL-11</scope>
    <source>
        <tissue evidence="2">Abdominal perisympathetic organs</tissue>
    </source>
</reference>
<protein>
    <recommendedName>
        <fullName evidence="3">Periviscerokinin-2</fullName>
        <shortName evidence="3">PanSp-PVK-2</shortName>
    </recommendedName>
</protein>
<feature type="peptide" id="PRO_0000378801" description="Periviscerokinin-2" evidence="2">
    <location>
        <begin position="1"/>
        <end position="11"/>
    </location>
</feature>
<feature type="modified residue" description="Valine amide" evidence="2">
    <location>
        <position position="11"/>
    </location>
</feature>
<dbReference type="GO" id="GO:0005576">
    <property type="term" value="C:extracellular region"/>
    <property type="evidence" value="ECO:0007669"/>
    <property type="project" value="UniProtKB-SubCell"/>
</dbReference>
<dbReference type="GO" id="GO:0007218">
    <property type="term" value="P:neuropeptide signaling pathway"/>
    <property type="evidence" value="ECO:0007669"/>
    <property type="project" value="UniProtKB-KW"/>
</dbReference>
<dbReference type="InterPro" id="IPR013231">
    <property type="entry name" value="Periviscerokinin"/>
</dbReference>
<dbReference type="Pfam" id="PF08259">
    <property type="entry name" value="Periviscerokin"/>
    <property type="match status" value="1"/>
</dbReference>
<name>PVK2_PANSS</name>
<keyword id="KW-0027">Amidation</keyword>
<keyword id="KW-0903">Direct protein sequencing</keyword>
<keyword id="KW-0527">Neuropeptide</keyword>
<keyword id="KW-0964">Secreted</keyword>
<evidence type="ECO:0000255" key="1"/>
<evidence type="ECO:0000269" key="2">
    <source>
    </source>
</evidence>
<evidence type="ECO:0000303" key="3">
    <source>
    </source>
</evidence>
<evidence type="ECO:0000305" key="4"/>
<organism>
    <name type="scientific">Panchlora sp. (strain SR-2005)</name>
    <name type="common">Cockroach</name>
    <dbReference type="NCBI Taxonomy" id="348758"/>
    <lineage>
        <taxon>Eukaryota</taxon>
        <taxon>Metazoa</taxon>
        <taxon>Ecdysozoa</taxon>
        <taxon>Arthropoda</taxon>
        <taxon>Hexapoda</taxon>
        <taxon>Insecta</taxon>
        <taxon>Pterygota</taxon>
        <taxon>Neoptera</taxon>
        <taxon>Polyneoptera</taxon>
        <taxon>Dictyoptera</taxon>
        <taxon>Blattodea</taxon>
        <taxon>Blaberoidea</taxon>
        <taxon>Blaberidae</taxon>
        <taxon>Panchlorinae</taxon>
        <taxon>Panchlora</taxon>
    </lineage>
</organism>
<accession>P85694</accession>
<proteinExistence type="evidence at protein level"/>